<organism>
    <name type="scientific">Kineococcus radiotolerans (strain ATCC BAA-149 / DSM 14245 / SRS30216)</name>
    <dbReference type="NCBI Taxonomy" id="266940"/>
    <lineage>
        <taxon>Bacteria</taxon>
        <taxon>Bacillati</taxon>
        <taxon>Actinomycetota</taxon>
        <taxon>Actinomycetes</taxon>
        <taxon>Kineosporiales</taxon>
        <taxon>Kineosporiaceae</taxon>
        <taxon>Kineococcus</taxon>
    </lineage>
</organism>
<sequence>MTVADPRLTDAPAHSRTSLLGRRRGGRPPRFPRAAAYVALTKPRIVELLLITTIPVMLFAAGGLPSGWLILTTFVGGALAAGCANTLNCYFDRDIDALMKRTENRPLVTGEVSPRQALVFATVLGIASTAIFVAFVNVLSAALALGAILLYVVGYTLLLKRRTSQNIVWGGVAGCMQVLIGWTAVRDSLDWAPFVLFGVIFLWTPPHYWPLSVRYREDYANAGVPMLPVVAKPTTVSRQIVLYTIAMVLCSLLLVPLGGAGVVYGAAALVLGIGFLVQTIGLHRRATRFEVETGGRDAGTLEQLKRISPMGVFHGSITYLTLLSAAVAVDPFVRVGWPF</sequence>
<proteinExistence type="inferred from homology"/>
<evidence type="ECO:0000255" key="1">
    <source>
        <dbReference type="HAMAP-Rule" id="MF_00154"/>
    </source>
</evidence>
<evidence type="ECO:0000256" key="2">
    <source>
        <dbReference type="SAM" id="MobiDB-lite"/>
    </source>
</evidence>
<gene>
    <name evidence="1" type="primary">ctaB</name>
    <name type="ordered locus">Krad_2921</name>
</gene>
<accession>A6WC46</accession>
<keyword id="KW-1003">Cell membrane</keyword>
<keyword id="KW-0350">Heme biosynthesis</keyword>
<keyword id="KW-0472">Membrane</keyword>
<keyword id="KW-1185">Reference proteome</keyword>
<keyword id="KW-0808">Transferase</keyword>
<keyword id="KW-0812">Transmembrane</keyword>
<keyword id="KW-1133">Transmembrane helix</keyword>
<name>COXX_KINRD</name>
<protein>
    <recommendedName>
        <fullName evidence="1">Protoheme IX farnesyltransferase</fullName>
        <ecNumber evidence="1">2.5.1.141</ecNumber>
    </recommendedName>
    <alternativeName>
        <fullName evidence="1">Heme B farnesyltransferase</fullName>
    </alternativeName>
    <alternativeName>
        <fullName evidence="1">Heme O synthase</fullName>
    </alternativeName>
</protein>
<feature type="chain" id="PRO_0000346051" description="Protoheme IX farnesyltransferase">
    <location>
        <begin position="1"/>
        <end position="339"/>
    </location>
</feature>
<feature type="transmembrane region" description="Helical" evidence="1">
    <location>
        <begin position="45"/>
        <end position="65"/>
    </location>
</feature>
<feature type="transmembrane region" description="Helical" evidence="1">
    <location>
        <begin position="67"/>
        <end position="87"/>
    </location>
</feature>
<feature type="transmembrane region" description="Helical" evidence="1">
    <location>
        <begin position="117"/>
        <end position="136"/>
    </location>
</feature>
<feature type="transmembrane region" description="Helical" evidence="1">
    <location>
        <begin position="140"/>
        <end position="159"/>
    </location>
</feature>
<feature type="transmembrane region" description="Helical" evidence="1">
    <location>
        <begin position="165"/>
        <end position="185"/>
    </location>
</feature>
<feature type="transmembrane region" description="Helical" evidence="1">
    <location>
        <begin position="191"/>
        <end position="211"/>
    </location>
</feature>
<feature type="transmembrane region" description="Helical" evidence="1">
    <location>
        <begin position="236"/>
        <end position="256"/>
    </location>
</feature>
<feature type="transmembrane region" description="Helical" evidence="1">
    <location>
        <begin position="257"/>
        <end position="277"/>
    </location>
</feature>
<feature type="transmembrane region" description="Helical" evidence="1">
    <location>
        <begin position="309"/>
        <end position="329"/>
    </location>
</feature>
<feature type="region of interest" description="Disordered" evidence="2">
    <location>
        <begin position="1"/>
        <end position="27"/>
    </location>
</feature>
<dbReference type="EC" id="2.5.1.141" evidence="1"/>
<dbReference type="EMBL" id="CP000750">
    <property type="protein sequence ID" value="ABS04385.1"/>
    <property type="molecule type" value="Genomic_DNA"/>
</dbReference>
<dbReference type="RefSeq" id="WP_012087369.1">
    <property type="nucleotide sequence ID" value="NC_009664.2"/>
</dbReference>
<dbReference type="SMR" id="A6WC46"/>
<dbReference type="STRING" id="266940.Krad_2921"/>
<dbReference type="KEGG" id="kra:Krad_2921"/>
<dbReference type="eggNOG" id="COG0109">
    <property type="taxonomic scope" value="Bacteria"/>
</dbReference>
<dbReference type="HOGENOM" id="CLU_029631_0_1_11"/>
<dbReference type="OrthoDB" id="9814417at2"/>
<dbReference type="UniPathway" id="UPA00834">
    <property type="reaction ID" value="UER00712"/>
</dbReference>
<dbReference type="Proteomes" id="UP000001116">
    <property type="component" value="Chromosome"/>
</dbReference>
<dbReference type="GO" id="GO:0005886">
    <property type="term" value="C:plasma membrane"/>
    <property type="evidence" value="ECO:0007669"/>
    <property type="project" value="UniProtKB-SubCell"/>
</dbReference>
<dbReference type="GO" id="GO:0008495">
    <property type="term" value="F:protoheme IX farnesyltransferase activity"/>
    <property type="evidence" value="ECO:0007669"/>
    <property type="project" value="UniProtKB-UniRule"/>
</dbReference>
<dbReference type="GO" id="GO:0048034">
    <property type="term" value="P:heme O biosynthetic process"/>
    <property type="evidence" value="ECO:0007669"/>
    <property type="project" value="UniProtKB-UniRule"/>
</dbReference>
<dbReference type="CDD" id="cd13957">
    <property type="entry name" value="PT_UbiA_Cox10"/>
    <property type="match status" value="1"/>
</dbReference>
<dbReference type="FunFam" id="1.10.357.140:FF:000001">
    <property type="entry name" value="Protoheme IX farnesyltransferase"/>
    <property type="match status" value="1"/>
</dbReference>
<dbReference type="Gene3D" id="1.10.357.140">
    <property type="entry name" value="UbiA prenyltransferase"/>
    <property type="match status" value="1"/>
</dbReference>
<dbReference type="HAMAP" id="MF_00154">
    <property type="entry name" value="CyoE_CtaB"/>
    <property type="match status" value="1"/>
</dbReference>
<dbReference type="InterPro" id="IPR006369">
    <property type="entry name" value="Protohaem_IX_farnesylTrfase"/>
</dbReference>
<dbReference type="InterPro" id="IPR000537">
    <property type="entry name" value="UbiA_prenyltransferase"/>
</dbReference>
<dbReference type="InterPro" id="IPR030470">
    <property type="entry name" value="UbiA_prenylTrfase_CS"/>
</dbReference>
<dbReference type="InterPro" id="IPR044878">
    <property type="entry name" value="UbiA_sf"/>
</dbReference>
<dbReference type="NCBIfam" id="TIGR01473">
    <property type="entry name" value="cyoE_ctaB"/>
    <property type="match status" value="1"/>
</dbReference>
<dbReference type="NCBIfam" id="NF003349">
    <property type="entry name" value="PRK04375.1-2"/>
    <property type="match status" value="1"/>
</dbReference>
<dbReference type="PANTHER" id="PTHR43448:SF7">
    <property type="entry name" value="4-HYDROXYBENZOATE SOLANESYLTRANSFERASE"/>
    <property type="match status" value="1"/>
</dbReference>
<dbReference type="PANTHER" id="PTHR43448">
    <property type="entry name" value="PROTOHEME IX FARNESYLTRANSFERASE, MITOCHONDRIAL"/>
    <property type="match status" value="1"/>
</dbReference>
<dbReference type="Pfam" id="PF01040">
    <property type="entry name" value="UbiA"/>
    <property type="match status" value="1"/>
</dbReference>
<dbReference type="PROSITE" id="PS00943">
    <property type="entry name" value="UBIA"/>
    <property type="match status" value="1"/>
</dbReference>
<comment type="function">
    <text evidence="1">Converts heme B (protoheme IX) to heme O by substitution of the vinyl group on carbon 2 of heme B porphyrin ring with a hydroxyethyl farnesyl side group.</text>
</comment>
<comment type="catalytic activity">
    <reaction evidence="1">
        <text>heme b + (2E,6E)-farnesyl diphosphate + H2O = Fe(II)-heme o + diphosphate</text>
        <dbReference type="Rhea" id="RHEA:28070"/>
        <dbReference type="ChEBI" id="CHEBI:15377"/>
        <dbReference type="ChEBI" id="CHEBI:33019"/>
        <dbReference type="ChEBI" id="CHEBI:60344"/>
        <dbReference type="ChEBI" id="CHEBI:60530"/>
        <dbReference type="ChEBI" id="CHEBI:175763"/>
        <dbReference type="EC" id="2.5.1.141"/>
    </reaction>
</comment>
<comment type="pathway">
    <text evidence="1">Porphyrin-containing compound metabolism; heme O biosynthesis; heme O from protoheme: step 1/1.</text>
</comment>
<comment type="subcellular location">
    <subcellularLocation>
        <location evidence="1">Cell membrane</location>
        <topology evidence="1">Multi-pass membrane protein</topology>
    </subcellularLocation>
</comment>
<comment type="miscellaneous">
    <text evidence="1">Carbon 2 of the heme B porphyrin ring is defined according to the Fischer nomenclature.</text>
</comment>
<comment type="similarity">
    <text evidence="1">Belongs to the UbiA prenyltransferase family. Protoheme IX farnesyltransferase subfamily.</text>
</comment>
<reference key="1">
    <citation type="journal article" date="2008" name="PLoS ONE">
        <title>Survival in nuclear waste, extreme resistance, and potential applications gleaned from the genome sequence of Kineococcus radiotolerans SRS30216.</title>
        <authorList>
            <person name="Bagwell C.E."/>
            <person name="Bhat S."/>
            <person name="Hawkins G.M."/>
            <person name="Smith B.W."/>
            <person name="Biswas T."/>
            <person name="Hoover T.R."/>
            <person name="Saunders E."/>
            <person name="Han C.S."/>
            <person name="Tsodikov O.V."/>
            <person name="Shimkets L.J."/>
        </authorList>
    </citation>
    <scope>NUCLEOTIDE SEQUENCE [LARGE SCALE GENOMIC DNA]</scope>
    <source>
        <strain>ATCC BAA-149 / DSM 14245 / SRS30216</strain>
    </source>
</reference>